<dbReference type="EMBL" id="CP000789">
    <property type="protein sequence ID" value="ABU70512.1"/>
    <property type="molecule type" value="Genomic_DNA"/>
</dbReference>
<dbReference type="RefSeq" id="WP_005534010.1">
    <property type="nucleotide sequence ID" value="NC_022269.1"/>
</dbReference>
<dbReference type="SMR" id="A7MZN5"/>
<dbReference type="KEGG" id="vha:VIBHAR_01542"/>
<dbReference type="PATRIC" id="fig|338187.25.peg.1119"/>
<dbReference type="Proteomes" id="UP000008152">
    <property type="component" value="Chromosome I"/>
</dbReference>
<dbReference type="Gene3D" id="1.10.287.680">
    <property type="entry name" value="Helix hairpin bin"/>
    <property type="match status" value="1"/>
</dbReference>
<dbReference type="Gene3D" id="1.10.3190.10">
    <property type="entry name" value="yfbu gene product, domain 2"/>
    <property type="match status" value="1"/>
</dbReference>
<dbReference type="HAMAP" id="MF_00762">
    <property type="entry name" value="UPF0304"/>
    <property type="match status" value="1"/>
</dbReference>
<dbReference type="InterPro" id="IPR005587">
    <property type="entry name" value="UPF0304_YfbU"/>
</dbReference>
<dbReference type="InterPro" id="IPR023146">
    <property type="entry name" value="YfbU_alpha-helical_sf"/>
</dbReference>
<dbReference type="InterPro" id="IPR023145">
    <property type="entry name" value="YfbU_helix-hairpin_sf"/>
</dbReference>
<dbReference type="NCBIfam" id="NF003936">
    <property type="entry name" value="PRK05445.1"/>
    <property type="match status" value="1"/>
</dbReference>
<dbReference type="Pfam" id="PF03887">
    <property type="entry name" value="YfbU"/>
    <property type="match status" value="1"/>
</dbReference>
<dbReference type="PIRSF" id="PIRSF006272">
    <property type="entry name" value="UCP006272"/>
    <property type="match status" value="1"/>
</dbReference>
<dbReference type="SUPFAM" id="SSF116960">
    <property type="entry name" value="YfbU-like"/>
    <property type="match status" value="1"/>
</dbReference>
<organism>
    <name type="scientific">Vibrio campbellii (strain ATCC BAA-1116)</name>
    <dbReference type="NCBI Taxonomy" id="2902295"/>
    <lineage>
        <taxon>Bacteria</taxon>
        <taxon>Pseudomonadati</taxon>
        <taxon>Pseudomonadota</taxon>
        <taxon>Gammaproteobacteria</taxon>
        <taxon>Vibrionales</taxon>
        <taxon>Vibrionaceae</taxon>
        <taxon>Vibrio</taxon>
    </lineage>
</organism>
<gene>
    <name type="ordered locus">VIBHAR_01542</name>
</gene>
<reference key="1">
    <citation type="submission" date="2007-08" db="EMBL/GenBank/DDBJ databases">
        <authorList>
            <consortium name="The Vibrio harveyi Genome Sequencing Project"/>
            <person name="Bassler B."/>
            <person name="Clifton S.W."/>
            <person name="Fulton L."/>
            <person name="Delehaunty K."/>
            <person name="Fronick C."/>
            <person name="Harrison M."/>
            <person name="Markivic C."/>
            <person name="Fulton R."/>
            <person name="Tin-Wollam A.-M."/>
            <person name="Shah N."/>
            <person name="Pepin K."/>
            <person name="Nash W."/>
            <person name="Thiruvilangam P."/>
            <person name="Bhonagiri V."/>
            <person name="Waters C."/>
            <person name="Tu K.C."/>
            <person name="Irgon J."/>
            <person name="Wilson R.K."/>
        </authorList>
    </citation>
    <scope>NUCLEOTIDE SEQUENCE [LARGE SCALE GENOMIC DNA]</scope>
    <source>
        <strain>ATCC BAA-1116 / BB120</strain>
    </source>
</reference>
<comment type="similarity">
    <text evidence="1">Belongs to the UPF0304 family.</text>
</comment>
<sequence length="166" mass="19830">MEMSNAQRLILSNQYNLMSQLDPSNAAKYKRLQTIVERGYELQMRELNKDFGCITETECREIIDIMEMYHAMQESNKMLDDEERGKVDQRRLQFLGFDIATEAQQVHYVRFLVDSEGLYPQFDKADHHFNSQMPMLDKYRRMLKTWRNCPRQYHLCANELAQIFSA</sequence>
<proteinExistence type="inferred from homology"/>
<name>Y1542_VIBC1</name>
<feature type="chain" id="PRO_1000046768" description="UPF0304 protein VIBHAR_01542">
    <location>
        <begin position="1"/>
        <end position="166"/>
    </location>
</feature>
<protein>
    <recommendedName>
        <fullName evidence="1">UPF0304 protein VIBHAR_01542</fullName>
    </recommendedName>
</protein>
<accession>A7MZN5</accession>
<evidence type="ECO:0000255" key="1">
    <source>
        <dbReference type="HAMAP-Rule" id="MF_00762"/>
    </source>
</evidence>